<accession>Q0TGX1</accession>
<evidence type="ECO:0000255" key="1">
    <source>
        <dbReference type="HAMAP-Rule" id="MF_00031"/>
    </source>
</evidence>
<sequence>MIGRLRGIIIEKQPPLVLIEVGGVGYEVHMPMTCFYELPEAGQEAIVFTHFVVREDAQLLYGFNNKQERTLFKELIKTNGVGPKLALAILSGMSAQQFVNAVEREEVGALVKLPGIGKKTAERLIVEMKDRFKGLHGDLFTPAADLVLTSPASPATDDAEQEAVAALVALGYKPQEASRMVSKIARPDASSETLIREALRAAL</sequence>
<keyword id="KW-0963">Cytoplasm</keyword>
<keyword id="KW-0227">DNA damage</keyword>
<keyword id="KW-0233">DNA recombination</keyword>
<keyword id="KW-0234">DNA repair</keyword>
<keyword id="KW-0238">DNA-binding</keyword>
<keyword id="KW-0742">SOS response</keyword>
<comment type="function">
    <text evidence="1">The RuvA-RuvB-RuvC complex processes Holliday junction (HJ) DNA during genetic recombination and DNA repair, while the RuvA-RuvB complex plays an important role in the rescue of blocked DNA replication forks via replication fork reversal (RFR). RuvA specifically binds to HJ cruciform DNA, conferring on it an open structure. The RuvB hexamer acts as an ATP-dependent pump, pulling dsDNA into and through the RuvAB complex. HJ branch migration allows RuvC to scan DNA until it finds its consensus sequence, where it cleaves and resolves the cruciform DNA.</text>
</comment>
<comment type="subunit">
    <text evidence="1">Homotetramer. Forms an RuvA(8)-RuvB(12)-Holliday junction (HJ) complex. HJ DNA is sandwiched between 2 RuvA tetramers; dsDNA enters through RuvA and exits via RuvB. An RuvB hexamer assembles on each DNA strand where it exits the tetramer. Each RuvB hexamer is contacted by two RuvA subunits (via domain III) on 2 adjacent RuvB subunits; this complex drives branch migration. In the full resolvosome a probable DNA-RuvA(4)-RuvB(12)-RuvC(2) complex forms which resolves the HJ.</text>
</comment>
<comment type="subcellular location">
    <subcellularLocation>
        <location evidence="1">Cytoplasm</location>
    </subcellularLocation>
</comment>
<comment type="domain">
    <text evidence="1">Has three domains with a flexible linker between the domains II and III and assumes an 'L' shape. Domain III is highly mobile and contacts RuvB.</text>
</comment>
<comment type="similarity">
    <text evidence="1">Belongs to the RuvA family.</text>
</comment>
<proteinExistence type="inferred from homology"/>
<dbReference type="EMBL" id="CP000247">
    <property type="protein sequence ID" value="ABG69808.1"/>
    <property type="molecule type" value="Genomic_DNA"/>
</dbReference>
<dbReference type="RefSeq" id="WP_000580323.1">
    <property type="nucleotide sequence ID" value="NC_008253.1"/>
</dbReference>
<dbReference type="SMR" id="Q0TGX1"/>
<dbReference type="GeneID" id="75057740"/>
<dbReference type="KEGG" id="ecp:ECP_1805"/>
<dbReference type="HOGENOM" id="CLU_087936_0_0_6"/>
<dbReference type="Proteomes" id="UP000009182">
    <property type="component" value="Chromosome"/>
</dbReference>
<dbReference type="GO" id="GO:0005737">
    <property type="term" value="C:cytoplasm"/>
    <property type="evidence" value="ECO:0007669"/>
    <property type="project" value="UniProtKB-SubCell"/>
</dbReference>
<dbReference type="GO" id="GO:0009379">
    <property type="term" value="C:Holliday junction helicase complex"/>
    <property type="evidence" value="ECO:0007669"/>
    <property type="project" value="InterPro"/>
</dbReference>
<dbReference type="GO" id="GO:0048476">
    <property type="term" value="C:Holliday junction resolvase complex"/>
    <property type="evidence" value="ECO:0007669"/>
    <property type="project" value="UniProtKB-UniRule"/>
</dbReference>
<dbReference type="GO" id="GO:0005524">
    <property type="term" value="F:ATP binding"/>
    <property type="evidence" value="ECO:0007669"/>
    <property type="project" value="InterPro"/>
</dbReference>
<dbReference type="GO" id="GO:0000400">
    <property type="term" value="F:four-way junction DNA binding"/>
    <property type="evidence" value="ECO:0007669"/>
    <property type="project" value="UniProtKB-UniRule"/>
</dbReference>
<dbReference type="GO" id="GO:0009378">
    <property type="term" value="F:four-way junction helicase activity"/>
    <property type="evidence" value="ECO:0007669"/>
    <property type="project" value="InterPro"/>
</dbReference>
<dbReference type="GO" id="GO:0006310">
    <property type="term" value="P:DNA recombination"/>
    <property type="evidence" value="ECO:0007669"/>
    <property type="project" value="UniProtKB-UniRule"/>
</dbReference>
<dbReference type="GO" id="GO:0006281">
    <property type="term" value="P:DNA repair"/>
    <property type="evidence" value="ECO:0007669"/>
    <property type="project" value="UniProtKB-UniRule"/>
</dbReference>
<dbReference type="GO" id="GO:0009432">
    <property type="term" value="P:SOS response"/>
    <property type="evidence" value="ECO:0007669"/>
    <property type="project" value="UniProtKB-UniRule"/>
</dbReference>
<dbReference type="CDD" id="cd14332">
    <property type="entry name" value="UBA_RuvA_C"/>
    <property type="match status" value="1"/>
</dbReference>
<dbReference type="FunFam" id="1.10.150.20:FF:000012">
    <property type="entry name" value="Holliday junction ATP-dependent DNA helicase RuvA"/>
    <property type="match status" value="1"/>
</dbReference>
<dbReference type="FunFam" id="1.10.8.10:FF:000008">
    <property type="entry name" value="Holliday junction ATP-dependent DNA helicase RuvA"/>
    <property type="match status" value="1"/>
</dbReference>
<dbReference type="FunFam" id="2.40.50.140:FF:000083">
    <property type="entry name" value="Holliday junction ATP-dependent DNA helicase RuvA"/>
    <property type="match status" value="1"/>
</dbReference>
<dbReference type="Gene3D" id="1.10.150.20">
    <property type="entry name" value="5' to 3' exonuclease, C-terminal subdomain"/>
    <property type="match status" value="1"/>
</dbReference>
<dbReference type="Gene3D" id="1.10.8.10">
    <property type="entry name" value="DNA helicase RuvA subunit, C-terminal domain"/>
    <property type="match status" value="1"/>
</dbReference>
<dbReference type="Gene3D" id="2.40.50.140">
    <property type="entry name" value="Nucleic acid-binding proteins"/>
    <property type="match status" value="1"/>
</dbReference>
<dbReference type="HAMAP" id="MF_00031">
    <property type="entry name" value="DNA_HJ_migration_RuvA"/>
    <property type="match status" value="1"/>
</dbReference>
<dbReference type="InterPro" id="IPR013849">
    <property type="entry name" value="DNA_helicase_Holl-junc_RuvA_I"/>
</dbReference>
<dbReference type="InterPro" id="IPR003583">
    <property type="entry name" value="Hlx-hairpin-Hlx_DNA-bd_motif"/>
</dbReference>
<dbReference type="InterPro" id="IPR012340">
    <property type="entry name" value="NA-bd_OB-fold"/>
</dbReference>
<dbReference type="InterPro" id="IPR000085">
    <property type="entry name" value="RuvA"/>
</dbReference>
<dbReference type="InterPro" id="IPR010994">
    <property type="entry name" value="RuvA_2-like"/>
</dbReference>
<dbReference type="InterPro" id="IPR011114">
    <property type="entry name" value="RuvA_C"/>
</dbReference>
<dbReference type="InterPro" id="IPR036267">
    <property type="entry name" value="RuvA_C_sf"/>
</dbReference>
<dbReference type="NCBIfam" id="TIGR00084">
    <property type="entry name" value="ruvA"/>
    <property type="match status" value="1"/>
</dbReference>
<dbReference type="Pfam" id="PF14520">
    <property type="entry name" value="HHH_5"/>
    <property type="match status" value="1"/>
</dbReference>
<dbReference type="Pfam" id="PF07499">
    <property type="entry name" value="RuvA_C"/>
    <property type="match status" value="1"/>
</dbReference>
<dbReference type="Pfam" id="PF01330">
    <property type="entry name" value="RuvA_N"/>
    <property type="match status" value="1"/>
</dbReference>
<dbReference type="SMART" id="SM00278">
    <property type="entry name" value="HhH1"/>
    <property type="match status" value="2"/>
</dbReference>
<dbReference type="SUPFAM" id="SSF46929">
    <property type="entry name" value="DNA helicase RuvA subunit, C-terminal domain"/>
    <property type="match status" value="1"/>
</dbReference>
<dbReference type="SUPFAM" id="SSF50249">
    <property type="entry name" value="Nucleic acid-binding proteins"/>
    <property type="match status" value="1"/>
</dbReference>
<dbReference type="SUPFAM" id="SSF47781">
    <property type="entry name" value="RuvA domain 2-like"/>
    <property type="match status" value="1"/>
</dbReference>
<organism>
    <name type="scientific">Escherichia coli O6:K15:H31 (strain 536 / UPEC)</name>
    <dbReference type="NCBI Taxonomy" id="362663"/>
    <lineage>
        <taxon>Bacteria</taxon>
        <taxon>Pseudomonadati</taxon>
        <taxon>Pseudomonadota</taxon>
        <taxon>Gammaproteobacteria</taxon>
        <taxon>Enterobacterales</taxon>
        <taxon>Enterobacteriaceae</taxon>
        <taxon>Escherichia</taxon>
    </lineage>
</organism>
<feature type="chain" id="PRO_1000002443" description="Holliday junction branch migration complex subunit RuvA">
    <location>
        <begin position="1"/>
        <end position="203"/>
    </location>
</feature>
<feature type="region of interest" description="Domain I" evidence="1">
    <location>
        <begin position="1"/>
        <end position="64"/>
    </location>
</feature>
<feature type="region of interest" description="Domain II" evidence="1">
    <location>
        <begin position="65"/>
        <end position="142"/>
    </location>
</feature>
<feature type="region of interest" description="Flexible linker" evidence="1">
    <location>
        <begin position="143"/>
        <end position="154"/>
    </location>
</feature>
<feature type="region of interest" description="Domain III" evidence="1">
    <location>
        <begin position="155"/>
        <end position="203"/>
    </location>
</feature>
<name>RUVA_ECOL5</name>
<reference key="1">
    <citation type="journal article" date="2006" name="Mol. Microbiol.">
        <title>Role of pathogenicity island-associated integrases in the genome plasticity of uropathogenic Escherichia coli strain 536.</title>
        <authorList>
            <person name="Hochhut B."/>
            <person name="Wilde C."/>
            <person name="Balling G."/>
            <person name="Middendorf B."/>
            <person name="Dobrindt U."/>
            <person name="Brzuszkiewicz E."/>
            <person name="Gottschalk G."/>
            <person name="Carniel E."/>
            <person name="Hacker J."/>
        </authorList>
    </citation>
    <scope>NUCLEOTIDE SEQUENCE [LARGE SCALE GENOMIC DNA]</scope>
    <source>
        <strain>536 / UPEC</strain>
    </source>
</reference>
<gene>
    <name evidence="1" type="primary">ruvA</name>
    <name type="ordered locus">ECP_1805</name>
</gene>
<protein>
    <recommendedName>
        <fullName evidence="1">Holliday junction branch migration complex subunit RuvA</fullName>
    </recommendedName>
</protein>